<reference key="1">
    <citation type="journal article" date="2007" name="J. Bacteriol.">
        <title>The complete genome sequence of the lactic acid bacterial paradigm Lactococcus lactis subsp. cremoris MG1363.</title>
        <authorList>
            <person name="Wegmann U."/>
            <person name="O'Connell-Motherway M."/>
            <person name="Zomer A."/>
            <person name="Buist G."/>
            <person name="Shearman C."/>
            <person name="Canchaya C."/>
            <person name="Ventura M."/>
            <person name="Goesmann A."/>
            <person name="Gasson M.J."/>
            <person name="Kuipers O.P."/>
            <person name="van Sinderen D."/>
            <person name="Kok J."/>
        </authorList>
    </citation>
    <scope>NUCLEOTIDE SEQUENCE [LARGE SCALE GENOMIC DNA]</scope>
    <source>
        <strain>MG1363</strain>
    </source>
</reference>
<feature type="chain" id="PRO_1000043167" description="3-dehydroquinate dehydratase">
    <location>
        <begin position="1"/>
        <end position="229"/>
    </location>
</feature>
<feature type="active site" description="Proton donor/acceptor" evidence="1">
    <location>
        <position position="121"/>
    </location>
</feature>
<feature type="active site" description="Schiff-base intermediate with substrate" evidence="1">
    <location>
        <position position="146"/>
    </location>
</feature>
<feature type="binding site" evidence="1">
    <location>
        <begin position="33"/>
        <end position="35"/>
    </location>
    <ligand>
        <name>3-dehydroquinate</name>
        <dbReference type="ChEBI" id="CHEBI:32364"/>
    </ligand>
</feature>
<feature type="binding site" evidence="1">
    <location>
        <position position="65"/>
    </location>
    <ligand>
        <name>3-dehydroquinate</name>
        <dbReference type="ChEBI" id="CHEBI:32364"/>
    </ligand>
</feature>
<feature type="binding site" evidence="1">
    <location>
        <position position="188"/>
    </location>
    <ligand>
        <name>3-dehydroquinate</name>
        <dbReference type="ChEBI" id="CHEBI:32364"/>
    </ligand>
</feature>
<feature type="binding site" evidence="1">
    <location>
        <position position="207"/>
    </location>
    <ligand>
        <name>3-dehydroquinate</name>
        <dbReference type="ChEBI" id="CHEBI:32364"/>
    </ligand>
</feature>
<feature type="binding site" evidence="1">
    <location>
        <position position="211"/>
    </location>
    <ligand>
        <name>3-dehydroquinate</name>
        <dbReference type="ChEBI" id="CHEBI:32364"/>
    </ligand>
</feature>
<gene>
    <name evidence="1" type="primary">aroD</name>
    <name type="ordered locus">llmg_0782</name>
</gene>
<dbReference type="EC" id="4.2.1.10" evidence="1"/>
<dbReference type="EMBL" id="AM406671">
    <property type="protein sequence ID" value="CAL97383.1"/>
    <property type="molecule type" value="Genomic_DNA"/>
</dbReference>
<dbReference type="RefSeq" id="WP_011834761.1">
    <property type="nucleotide sequence ID" value="NC_009004.1"/>
</dbReference>
<dbReference type="SMR" id="A2RJD1"/>
<dbReference type="STRING" id="416870.llmg_0782"/>
<dbReference type="KEGG" id="llm:llmg_0782"/>
<dbReference type="eggNOG" id="COG0710">
    <property type="taxonomic scope" value="Bacteria"/>
</dbReference>
<dbReference type="HOGENOM" id="CLU_064444_0_0_9"/>
<dbReference type="OrthoDB" id="9813659at2"/>
<dbReference type="PhylomeDB" id="A2RJD1"/>
<dbReference type="UniPathway" id="UPA00053">
    <property type="reaction ID" value="UER00086"/>
</dbReference>
<dbReference type="Proteomes" id="UP000000364">
    <property type="component" value="Chromosome"/>
</dbReference>
<dbReference type="GO" id="GO:0003855">
    <property type="term" value="F:3-dehydroquinate dehydratase activity"/>
    <property type="evidence" value="ECO:0007669"/>
    <property type="project" value="UniProtKB-UniRule"/>
</dbReference>
<dbReference type="GO" id="GO:0046279">
    <property type="term" value="P:3,4-dihydroxybenzoate biosynthetic process"/>
    <property type="evidence" value="ECO:0007669"/>
    <property type="project" value="UniProtKB-ARBA"/>
</dbReference>
<dbReference type="GO" id="GO:0008652">
    <property type="term" value="P:amino acid biosynthetic process"/>
    <property type="evidence" value="ECO:0007669"/>
    <property type="project" value="UniProtKB-KW"/>
</dbReference>
<dbReference type="GO" id="GO:0009073">
    <property type="term" value="P:aromatic amino acid family biosynthetic process"/>
    <property type="evidence" value="ECO:0007669"/>
    <property type="project" value="UniProtKB-KW"/>
</dbReference>
<dbReference type="GO" id="GO:0009423">
    <property type="term" value="P:chorismate biosynthetic process"/>
    <property type="evidence" value="ECO:0007669"/>
    <property type="project" value="UniProtKB-UniRule"/>
</dbReference>
<dbReference type="CDD" id="cd00502">
    <property type="entry name" value="DHQase_I"/>
    <property type="match status" value="1"/>
</dbReference>
<dbReference type="FunFam" id="3.20.20.70:FF:000047">
    <property type="entry name" value="3-dehydroquinate dehydratase"/>
    <property type="match status" value="1"/>
</dbReference>
<dbReference type="Gene3D" id="3.20.20.70">
    <property type="entry name" value="Aldolase class I"/>
    <property type="match status" value="1"/>
</dbReference>
<dbReference type="HAMAP" id="MF_00214">
    <property type="entry name" value="AroD"/>
    <property type="match status" value="1"/>
</dbReference>
<dbReference type="InterPro" id="IPR013785">
    <property type="entry name" value="Aldolase_TIM"/>
</dbReference>
<dbReference type="InterPro" id="IPR001381">
    <property type="entry name" value="DHquinase_I"/>
</dbReference>
<dbReference type="InterPro" id="IPR050146">
    <property type="entry name" value="Type-I_3-dehydroquinase"/>
</dbReference>
<dbReference type="NCBIfam" id="TIGR01093">
    <property type="entry name" value="aroD"/>
    <property type="match status" value="1"/>
</dbReference>
<dbReference type="PANTHER" id="PTHR43699">
    <property type="entry name" value="3-DEHYDROQUINATE DEHYDRATASE"/>
    <property type="match status" value="1"/>
</dbReference>
<dbReference type="PANTHER" id="PTHR43699:SF1">
    <property type="entry name" value="3-DEHYDROQUINATE DEHYDRATASE"/>
    <property type="match status" value="1"/>
</dbReference>
<dbReference type="Pfam" id="PF01487">
    <property type="entry name" value="DHquinase_I"/>
    <property type="match status" value="1"/>
</dbReference>
<dbReference type="SUPFAM" id="SSF51569">
    <property type="entry name" value="Aldolase"/>
    <property type="match status" value="1"/>
</dbReference>
<protein>
    <recommendedName>
        <fullName evidence="1">3-dehydroquinate dehydratase</fullName>
        <shortName evidence="1">3-dehydroquinase</shortName>
        <ecNumber evidence="1">4.2.1.10</ecNumber>
    </recommendedName>
    <alternativeName>
        <fullName evidence="1">Type I DHQase</fullName>
    </alternativeName>
    <alternativeName>
        <fullName evidence="1">Type I dehydroquinase</fullName>
        <shortName evidence="1">DHQ1</shortName>
    </alternativeName>
</protein>
<proteinExistence type="inferred from homology"/>
<name>AROD_LACLM</name>
<evidence type="ECO:0000255" key="1">
    <source>
        <dbReference type="HAMAP-Rule" id="MF_00214"/>
    </source>
</evidence>
<organism>
    <name type="scientific">Lactococcus lactis subsp. cremoris (strain MG1363)</name>
    <dbReference type="NCBI Taxonomy" id="416870"/>
    <lineage>
        <taxon>Bacteria</taxon>
        <taxon>Bacillati</taxon>
        <taxon>Bacillota</taxon>
        <taxon>Bacilli</taxon>
        <taxon>Lactobacillales</taxon>
        <taxon>Streptococcaceae</taxon>
        <taxon>Lactococcus</taxon>
        <taxon>Lactococcus cremoris subsp. cremoris</taxon>
    </lineage>
</organism>
<accession>A2RJD1</accession>
<keyword id="KW-0028">Amino-acid biosynthesis</keyword>
<keyword id="KW-0057">Aromatic amino acid biosynthesis</keyword>
<keyword id="KW-0456">Lyase</keyword>
<keyword id="KW-0704">Schiff base</keyword>
<sequence>MRRTKIVVPIMLTELTELEKVSVSDYHSADIVEWRADFLSADDIFEMAPKFFEKFKESKILFTLRTVREGGNIQVSEKKYLQILQEILKFDPDYIDVEYFSHGPSFAALKNYREKIVLSYHNFDEVPTDLTSRLIKMHEEGTAFVKVAVMPERECDVLDLLQITRDMTLEYGNHFISMAMGDLGRLSRISGYLTGSCWTFASLENSSAPGQISLKETVEILDLLENELA</sequence>
<comment type="function">
    <text evidence="1">Involved in the third step of the chorismate pathway, which leads to the biosynthesis of aromatic amino acids. Catalyzes the cis-dehydration of 3-dehydroquinate (DHQ) and introduces the first double bond of the aromatic ring to yield 3-dehydroshikimate.</text>
</comment>
<comment type="catalytic activity">
    <reaction evidence="1">
        <text>3-dehydroquinate = 3-dehydroshikimate + H2O</text>
        <dbReference type="Rhea" id="RHEA:21096"/>
        <dbReference type="ChEBI" id="CHEBI:15377"/>
        <dbReference type="ChEBI" id="CHEBI:16630"/>
        <dbReference type="ChEBI" id="CHEBI:32364"/>
        <dbReference type="EC" id="4.2.1.10"/>
    </reaction>
</comment>
<comment type="pathway">
    <text evidence="1">Metabolic intermediate biosynthesis; chorismate biosynthesis; chorismate from D-erythrose 4-phosphate and phosphoenolpyruvate: step 3/7.</text>
</comment>
<comment type="subunit">
    <text evidence="1">Homodimer.</text>
</comment>
<comment type="similarity">
    <text evidence="1">Belongs to the type-I 3-dehydroquinase family.</text>
</comment>